<keyword id="KW-1185">Reference proteome</keyword>
<organism>
    <name type="scientific">Escherichia coli O6:H1 (strain CFT073 / ATCC 700928 / UPEC)</name>
    <dbReference type="NCBI Taxonomy" id="199310"/>
    <lineage>
        <taxon>Bacteria</taxon>
        <taxon>Pseudomonadati</taxon>
        <taxon>Pseudomonadota</taxon>
        <taxon>Gammaproteobacteria</taxon>
        <taxon>Enterobacterales</taxon>
        <taxon>Enterobacteriaceae</taxon>
        <taxon>Escherichia</taxon>
    </lineage>
</organism>
<name>YHFU_ECOL6</name>
<protein>
    <recommendedName>
        <fullName>Uncharacterized protein YhfU</fullName>
    </recommendedName>
</protein>
<proteinExistence type="predicted"/>
<sequence length="117" mass="12479">MKKIGVAGLQREQIKKTIEATAPGCFEVFIHNDMEAAMKVKSGQLDYYIGACNTGAGAALSIAIAVIGYNKSCTIAKPGIKAKDEHIAKMIAEGKVAFGLSVEHVEHAIPMLINHLK</sequence>
<dbReference type="EMBL" id="AE014075">
    <property type="protein sequence ID" value="AAN82586.1"/>
    <property type="status" value="ALT_INIT"/>
    <property type="molecule type" value="Genomic_DNA"/>
</dbReference>
<dbReference type="RefSeq" id="WP_000719728.1">
    <property type="nucleotide sequence ID" value="NZ_CP051263.1"/>
</dbReference>
<dbReference type="SMR" id="P64632"/>
<dbReference type="STRING" id="199310.c4148"/>
<dbReference type="KEGG" id="ecc:c4148"/>
<dbReference type="eggNOG" id="ENOG5032N2F">
    <property type="taxonomic scope" value="Bacteria"/>
</dbReference>
<dbReference type="HOGENOM" id="CLU_133709_0_0_6"/>
<dbReference type="Proteomes" id="UP000001410">
    <property type="component" value="Chromosome"/>
</dbReference>
<dbReference type="InterPro" id="IPR021238">
    <property type="entry name" value="DUF2620"/>
</dbReference>
<dbReference type="Pfam" id="PF10941">
    <property type="entry name" value="DUF2620"/>
    <property type="match status" value="1"/>
</dbReference>
<comment type="sequence caution" evidence="1">
    <conflict type="erroneous initiation">
        <sequence resource="EMBL-CDS" id="AAN82586"/>
    </conflict>
</comment>
<feature type="chain" id="PRO_0000169531" description="Uncharacterized protein YhfU">
    <location>
        <begin position="1"/>
        <end position="117"/>
    </location>
</feature>
<reference key="1">
    <citation type="journal article" date="2002" name="Proc. Natl. Acad. Sci. U.S.A.">
        <title>Extensive mosaic structure revealed by the complete genome sequence of uropathogenic Escherichia coli.</title>
        <authorList>
            <person name="Welch R.A."/>
            <person name="Burland V."/>
            <person name="Plunkett G. III"/>
            <person name="Redford P."/>
            <person name="Roesch P."/>
            <person name="Rasko D."/>
            <person name="Buckles E.L."/>
            <person name="Liou S.-R."/>
            <person name="Boutin A."/>
            <person name="Hackett J."/>
            <person name="Stroud D."/>
            <person name="Mayhew G.F."/>
            <person name="Rose D.J."/>
            <person name="Zhou S."/>
            <person name="Schwartz D.C."/>
            <person name="Perna N.T."/>
            <person name="Mobley H.L.T."/>
            <person name="Donnenberg M.S."/>
            <person name="Blattner F.R."/>
        </authorList>
    </citation>
    <scope>NUCLEOTIDE SEQUENCE [LARGE SCALE GENOMIC DNA]</scope>
    <source>
        <strain>CFT073 / ATCC 700928 / UPEC</strain>
    </source>
</reference>
<accession>P64632</accession>
<accession>P45547</accession>
<gene>
    <name type="primary">yhfU</name>
    <name type="ordered locus">c4148</name>
</gene>
<evidence type="ECO:0000305" key="1"/>